<keyword id="KW-0004">4Fe-4S</keyword>
<keyword id="KW-0963">Cytoplasm</keyword>
<keyword id="KW-0408">Iron</keyword>
<keyword id="KW-0411">Iron-sulfur</keyword>
<keyword id="KW-0479">Metal-binding</keyword>
<keyword id="KW-0949">S-adenosyl-L-methionine</keyword>
<keyword id="KW-0808">Transferase</keyword>
<keyword id="KW-0819">tRNA processing</keyword>
<evidence type="ECO:0000255" key="1">
    <source>
        <dbReference type="HAMAP-Rule" id="MF_01864"/>
    </source>
</evidence>
<evidence type="ECO:0000255" key="2">
    <source>
        <dbReference type="PROSITE-ProRule" id="PRU01266"/>
    </source>
</evidence>
<feature type="chain" id="PRO_0000141741" description="tRNA-2-methylthio-N(6)-dimethylallyladenosine synthase">
    <location>
        <begin position="1"/>
        <end position="437"/>
    </location>
</feature>
<feature type="domain" description="MTTase N-terminal" evidence="1">
    <location>
        <begin position="1"/>
        <end position="115"/>
    </location>
</feature>
<feature type="domain" description="Radical SAM core" evidence="2">
    <location>
        <begin position="134"/>
        <end position="367"/>
    </location>
</feature>
<feature type="domain" description="TRAM" evidence="1">
    <location>
        <begin position="370"/>
        <end position="436"/>
    </location>
</feature>
<feature type="binding site" evidence="1">
    <location>
        <position position="10"/>
    </location>
    <ligand>
        <name>[4Fe-4S] cluster</name>
        <dbReference type="ChEBI" id="CHEBI:49883"/>
        <label>1</label>
    </ligand>
</feature>
<feature type="binding site" evidence="1">
    <location>
        <position position="46"/>
    </location>
    <ligand>
        <name>[4Fe-4S] cluster</name>
        <dbReference type="ChEBI" id="CHEBI:49883"/>
        <label>1</label>
    </ligand>
</feature>
<feature type="binding site" evidence="1">
    <location>
        <position position="78"/>
    </location>
    <ligand>
        <name>[4Fe-4S] cluster</name>
        <dbReference type="ChEBI" id="CHEBI:49883"/>
        <label>1</label>
    </ligand>
</feature>
<feature type="binding site" evidence="1">
    <location>
        <position position="148"/>
    </location>
    <ligand>
        <name>[4Fe-4S] cluster</name>
        <dbReference type="ChEBI" id="CHEBI:49883"/>
        <label>2</label>
        <note>4Fe-4S-S-AdoMet</note>
    </ligand>
</feature>
<feature type="binding site" evidence="1">
    <location>
        <position position="152"/>
    </location>
    <ligand>
        <name>[4Fe-4S] cluster</name>
        <dbReference type="ChEBI" id="CHEBI:49883"/>
        <label>2</label>
        <note>4Fe-4S-S-AdoMet</note>
    </ligand>
</feature>
<feature type="binding site" evidence="1">
    <location>
        <position position="155"/>
    </location>
    <ligand>
        <name>[4Fe-4S] cluster</name>
        <dbReference type="ChEBI" id="CHEBI:49883"/>
        <label>2</label>
        <note>4Fe-4S-S-AdoMet</note>
    </ligand>
</feature>
<name>MIAB_HELPJ</name>
<dbReference type="EC" id="2.8.4.3" evidence="1"/>
<dbReference type="EMBL" id="AE001439">
    <property type="protein sequence ID" value="AAD05846.1"/>
    <property type="molecule type" value="Genomic_DNA"/>
</dbReference>
<dbReference type="PIR" id="E71953">
    <property type="entry name" value="E71953"/>
</dbReference>
<dbReference type="RefSeq" id="WP_000870224.1">
    <property type="nucleotide sequence ID" value="NC_000921.1"/>
</dbReference>
<dbReference type="SMR" id="Q9ZMG6"/>
<dbReference type="KEGG" id="hpj:jhp_0254"/>
<dbReference type="eggNOG" id="COG0621">
    <property type="taxonomic scope" value="Bacteria"/>
</dbReference>
<dbReference type="Proteomes" id="UP000000804">
    <property type="component" value="Chromosome"/>
</dbReference>
<dbReference type="GO" id="GO:0005829">
    <property type="term" value="C:cytosol"/>
    <property type="evidence" value="ECO:0007669"/>
    <property type="project" value="TreeGrafter"/>
</dbReference>
<dbReference type="GO" id="GO:0051539">
    <property type="term" value="F:4 iron, 4 sulfur cluster binding"/>
    <property type="evidence" value="ECO:0007669"/>
    <property type="project" value="UniProtKB-UniRule"/>
</dbReference>
<dbReference type="GO" id="GO:0046872">
    <property type="term" value="F:metal ion binding"/>
    <property type="evidence" value="ECO:0007669"/>
    <property type="project" value="UniProtKB-KW"/>
</dbReference>
<dbReference type="GO" id="GO:0035597">
    <property type="term" value="F:N6-isopentenyladenosine methylthiotransferase activity"/>
    <property type="evidence" value="ECO:0007669"/>
    <property type="project" value="TreeGrafter"/>
</dbReference>
<dbReference type="CDD" id="cd01335">
    <property type="entry name" value="Radical_SAM"/>
    <property type="match status" value="1"/>
</dbReference>
<dbReference type="FunFam" id="3.40.50.12160:FF:000003">
    <property type="entry name" value="CDK5 regulatory subunit-associated protein 1"/>
    <property type="match status" value="1"/>
</dbReference>
<dbReference type="FunFam" id="3.80.30.20:FF:000013">
    <property type="entry name" value="tRNA-2-methylthio-N(6)-dimethylallyladenosine synthase"/>
    <property type="match status" value="1"/>
</dbReference>
<dbReference type="Gene3D" id="3.40.50.12160">
    <property type="entry name" value="Methylthiotransferase, N-terminal domain"/>
    <property type="match status" value="1"/>
</dbReference>
<dbReference type="Gene3D" id="3.80.30.20">
    <property type="entry name" value="tm_1862 like domain"/>
    <property type="match status" value="1"/>
</dbReference>
<dbReference type="HAMAP" id="MF_01864">
    <property type="entry name" value="tRNA_metthiotr_MiaB"/>
    <property type="match status" value="1"/>
</dbReference>
<dbReference type="InterPro" id="IPR006638">
    <property type="entry name" value="Elp3/MiaA/NifB-like_rSAM"/>
</dbReference>
<dbReference type="InterPro" id="IPR005839">
    <property type="entry name" value="Methylthiotransferase"/>
</dbReference>
<dbReference type="InterPro" id="IPR020612">
    <property type="entry name" value="Methylthiotransferase_CS"/>
</dbReference>
<dbReference type="InterPro" id="IPR013848">
    <property type="entry name" value="Methylthiotransferase_N"/>
</dbReference>
<dbReference type="InterPro" id="IPR038135">
    <property type="entry name" value="Methylthiotransferase_N_sf"/>
</dbReference>
<dbReference type="InterPro" id="IPR006463">
    <property type="entry name" value="MiaB_methiolase"/>
</dbReference>
<dbReference type="InterPro" id="IPR007197">
    <property type="entry name" value="rSAM"/>
</dbReference>
<dbReference type="InterPro" id="IPR023404">
    <property type="entry name" value="rSAM_horseshoe"/>
</dbReference>
<dbReference type="InterPro" id="IPR002792">
    <property type="entry name" value="TRAM_dom"/>
</dbReference>
<dbReference type="NCBIfam" id="TIGR01574">
    <property type="entry name" value="miaB-methiolase"/>
    <property type="match status" value="1"/>
</dbReference>
<dbReference type="NCBIfam" id="TIGR00089">
    <property type="entry name" value="MiaB/RimO family radical SAM methylthiotransferase"/>
    <property type="match status" value="1"/>
</dbReference>
<dbReference type="PANTHER" id="PTHR43020">
    <property type="entry name" value="CDK5 REGULATORY SUBUNIT-ASSOCIATED PROTEIN 1"/>
    <property type="match status" value="1"/>
</dbReference>
<dbReference type="PANTHER" id="PTHR43020:SF2">
    <property type="entry name" value="MITOCHONDRIAL TRNA METHYLTHIOTRANSFERASE CDK5RAP1"/>
    <property type="match status" value="1"/>
</dbReference>
<dbReference type="Pfam" id="PF04055">
    <property type="entry name" value="Radical_SAM"/>
    <property type="match status" value="1"/>
</dbReference>
<dbReference type="Pfam" id="PF00919">
    <property type="entry name" value="UPF0004"/>
    <property type="match status" value="1"/>
</dbReference>
<dbReference type="SFLD" id="SFLDF00273">
    <property type="entry name" value="(dimethylallyl)adenosine_tRNA"/>
    <property type="match status" value="1"/>
</dbReference>
<dbReference type="SFLD" id="SFLDG01082">
    <property type="entry name" value="B12-binding_domain_containing"/>
    <property type="match status" value="1"/>
</dbReference>
<dbReference type="SFLD" id="SFLDG01061">
    <property type="entry name" value="methylthiotransferase"/>
    <property type="match status" value="1"/>
</dbReference>
<dbReference type="SMART" id="SM00729">
    <property type="entry name" value="Elp3"/>
    <property type="match status" value="1"/>
</dbReference>
<dbReference type="SUPFAM" id="SSF102114">
    <property type="entry name" value="Radical SAM enzymes"/>
    <property type="match status" value="1"/>
</dbReference>
<dbReference type="PROSITE" id="PS51449">
    <property type="entry name" value="MTTASE_N"/>
    <property type="match status" value="1"/>
</dbReference>
<dbReference type="PROSITE" id="PS01278">
    <property type="entry name" value="MTTASE_RADICAL"/>
    <property type="match status" value="1"/>
</dbReference>
<dbReference type="PROSITE" id="PS51918">
    <property type="entry name" value="RADICAL_SAM"/>
    <property type="match status" value="1"/>
</dbReference>
<dbReference type="PROSITE" id="PS50926">
    <property type="entry name" value="TRAM"/>
    <property type="match status" value="1"/>
</dbReference>
<accession>Q9ZMG6</accession>
<proteinExistence type="inferred from homology"/>
<reference key="1">
    <citation type="journal article" date="1999" name="Nature">
        <title>Genomic sequence comparison of two unrelated isolates of the human gastric pathogen Helicobacter pylori.</title>
        <authorList>
            <person name="Alm R.A."/>
            <person name="Ling L.-S.L."/>
            <person name="Moir D.T."/>
            <person name="King B.L."/>
            <person name="Brown E.D."/>
            <person name="Doig P.C."/>
            <person name="Smith D.R."/>
            <person name="Noonan B."/>
            <person name="Guild B.C."/>
            <person name="deJonge B.L."/>
            <person name="Carmel G."/>
            <person name="Tummino P.J."/>
            <person name="Caruso A."/>
            <person name="Uria-Nickelsen M."/>
            <person name="Mills D.M."/>
            <person name="Ives C."/>
            <person name="Gibson R."/>
            <person name="Merberg D."/>
            <person name="Mills S.D."/>
            <person name="Jiang Q."/>
            <person name="Taylor D.E."/>
            <person name="Vovis G.F."/>
            <person name="Trust T.J."/>
        </authorList>
    </citation>
    <scope>NUCLEOTIDE SEQUENCE [LARGE SCALE GENOMIC DNA]</scope>
    <source>
        <strain>J99 / ATCC 700824</strain>
    </source>
</reference>
<protein>
    <recommendedName>
        <fullName evidence="1">tRNA-2-methylthio-N(6)-dimethylallyladenosine synthase</fullName>
        <ecNumber evidence="1">2.8.4.3</ecNumber>
    </recommendedName>
    <alternativeName>
        <fullName evidence="1">(Dimethylallyl)adenosine tRNA methylthiotransferase MiaB</fullName>
    </alternativeName>
    <alternativeName>
        <fullName evidence="1">tRNA-i(6)A37 methylthiotransferase</fullName>
    </alternativeName>
</protein>
<comment type="function">
    <text evidence="1">Catalyzes the methylthiolation of N6-(dimethylallyl)adenosine (i(6)A), leading to the formation of 2-methylthio-N6-(dimethylallyl)adenosine (ms(2)i(6)A) at position 37 in tRNAs that read codons beginning with uridine.</text>
</comment>
<comment type="catalytic activity">
    <reaction evidence="1">
        <text>N(6)-dimethylallyladenosine(37) in tRNA + (sulfur carrier)-SH + AH2 + 2 S-adenosyl-L-methionine = 2-methylsulfanyl-N(6)-dimethylallyladenosine(37) in tRNA + (sulfur carrier)-H + 5'-deoxyadenosine + L-methionine + A + S-adenosyl-L-homocysteine + 2 H(+)</text>
        <dbReference type="Rhea" id="RHEA:37067"/>
        <dbReference type="Rhea" id="RHEA-COMP:10375"/>
        <dbReference type="Rhea" id="RHEA-COMP:10376"/>
        <dbReference type="Rhea" id="RHEA-COMP:14737"/>
        <dbReference type="Rhea" id="RHEA-COMP:14739"/>
        <dbReference type="ChEBI" id="CHEBI:13193"/>
        <dbReference type="ChEBI" id="CHEBI:15378"/>
        <dbReference type="ChEBI" id="CHEBI:17319"/>
        <dbReference type="ChEBI" id="CHEBI:17499"/>
        <dbReference type="ChEBI" id="CHEBI:29917"/>
        <dbReference type="ChEBI" id="CHEBI:57844"/>
        <dbReference type="ChEBI" id="CHEBI:57856"/>
        <dbReference type="ChEBI" id="CHEBI:59789"/>
        <dbReference type="ChEBI" id="CHEBI:64428"/>
        <dbReference type="ChEBI" id="CHEBI:74415"/>
        <dbReference type="ChEBI" id="CHEBI:74417"/>
        <dbReference type="EC" id="2.8.4.3"/>
    </reaction>
</comment>
<comment type="cofactor">
    <cofactor evidence="1">
        <name>[4Fe-4S] cluster</name>
        <dbReference type="ChEBI" id="CHEBI:49883"/>
    </cofactor>
    <text evidence="1">Binds 2 [4Fe-4S] clusters. One cluster is coordinated with 3 cysteines and an exchangeable S-adenosyl-L-methionine.</text>
</comment>
<comment type="subunit">
    <text evidence="1">Monomer.</text>
</comment>
<comment type="subcellular location">
    <subcellularLocation>
        <location evidence="1">Cytoplasm</location>
    </subcellularLocation>
</comment>
<comment type="similarity">
    <text evidence="1">Belongs to the methylthiotransferase family. MiaB subfamily.</text>
</comment>
<sequence>MKVYIETMGCAMNSRDSEHLLSELSKLDYKETSDPKMADLILINTCSVREKPERKLFSEIGQFAKIKKPNAKIGVCGCTASHMGADILKKAPSVSFVLGARNVSKISQVIHKEKAVEVAIDYDESAYAFEFFEKKAQIRSLLNISIGCDKKCAYCIVPHTRGKEISIPMDLILKEAEKLANNGTKELMLLGQNVNNYGVRFSSEHAKVGFSDLLDKLSEIQGIERIRFTSPHPLHMNDAFLERFAQNPKVCKSIHMPLQSGSSAVLKMMRRGYSKEWFLNRVERLKALVPEVGISTDIIVGFPNESDKDFEDTMEVLEKVRFDTLYSFIYSPRPFTEAGAWKERVPLEISSLRLERLQNRHKEILEEKAKLEVGKTHVVLVENRREMDGQIVGFEGRSDTGKFIEVTCKEKKNPGELVRVEIISHSKGRLMATTKGN</sequence>
<organism>
    <name type="scientific">Helicobacter pylori (strain J99 / ATCC 700824)</name>
    <name type="common">Campylobacter pylori J99</name>
    <dbReference type="NCBI Taxonomy" id="85963"/>
    <lineage>
        <taxon>Bacteria</taxon>
        <taxon>Pseudomonadati</taxon>
        <taxon>Campylobacterota</taxon>
        <taxon>Epsilonproteobacteria</taxon>
        <taxon>Campylobacterales</taxon>
        <taxon>Helicobacteraceae</taxon>
        <taxon>Helicobacter</taxon>
    </lineage>
</organism>
<gene>
    <name evidence="1" type="primary">miaB</name>
    <name type="ordered locus">jhp_0254</name>
</gene>